<organism>
    <name type="scientific">Paracoccus denitrificans (strain Pd 1222)</name>
    <dbReference type="NCBI Taxonomy" id="318586"/>
    <lineage>
        <taxon>Bacteria</taxon>
        <taxon>Pseudomonadati</taxon>
        <taxon>Pseudomonadota</taxon>
        <taxon>Alphaproteobacteria</taxon>
        <taxon>Rhodobacterales</taxon>
        <taxon>Paracoccaceae</taxon>
        <taxon>Paracoccus</taxon>
    </lineage>
</organism>
<sequence length="270" mass="29414">MNAHVKTQGNGAVDAPFYLPQGDEVAVFEAAAANDLPVLLKGPTGCGKTRFVAHMAARLGRPLYTVACHDDLSAADLIGRYLLKGGETVWTDGPLTRAVREGAICYLDEVVEARKDVTVVLHPLTDDRRILPIDRTGEEIEAAPGFMLVASYNPGYQNILKTLKPSTRQRFVAMEFDFPEPAREVEIVARESGLDRDRTLGLVRLAGKIRGLKGQDLEEGVSTRLVVYAASLTRRGMNLDRAIEAAMIEPLTDDAEVKRGLRDLAAAIFG</sequence>
<gene>
    <name type="primary">norQ</name>
    <name type="ordered locus">Pden_2482</name>
</gene>
<keyword id="KW-0067">ATP-binding</keyword>
<keyword id="KW-0547">Nucleotide-binding</keyword>
<keyword id="KW-1185">Reference proteome</keyword>
<name>NORQ_PARDP</name>
<evidence type="ECO:0000255" key="1"/>
<evidence type="ECO:0000305" key="2"/>
<reference key="1">
    <citation type="journal article" date="1996" name="Eur. J. Biochem.">
        <title>Mutational analysis of the nor gene cluster which encodes nitric-oxide reductase from Paracoccus denitrificans.</title>
        <authorList>
            <person name="de Boer A.P.N."/>
            <person name="van der Oost J."/>
            <person name="Reijnders W.N.M."/>
            <person name="Westerhoff H.V."/>
            <person name="Stouthamer A.H."/>
            <person name="van Spanning R.J."/>
        </authorList>
    </citation>
    <scope>NUCLEOTIDE SEQUENCE [GENOMIC DNA]</scope>
</reference>
<reference key="2">
    <citation type="submission" date="2006-12" db="EMBL/GenBank/DDBJ databases">
        <title>Complete sequence of chromosome 1 of Paracoccus denitrificans PD1222.</title>
        <authorList>
            <person name="Copeland A."/>
            <person name="Lucas S."/>
            <person name="Lapidus A."/>
            <person name="Barry K."/>
            <person name="Detter J.C."/>
            <person name="Glavina del Rio T."/>
            <person name="Hammon N."/>
            <person name="Israni S."/>
            <person name="Dalin E."/>
            <person name="Tice H."/>
            <person name="Pitluck S."/>
            <person name="Munk A.C."/>
            <person name="Brettin T."/>
            <person name="Bruce D."/>
            <person name="Han C."/>
            <person name="Tapia R."/>
            <person name="Gilna P."/>
            <person name="Schmutz J."/>
            <person name="Larimer F."/>
            <person name="Land M."/>
            <person name="Hauser L."/>
            <person name="Kyrpides N."/>
            <person name="Lykidis A."/>
            <person name="Spiro S."/>
            <person name="Richardson D.J."/>
            <person name="Moir J.W.B."/>
            <person name="Ferguson S.J."/>
            <person name="van Spanning R.J.M."/>
            <person name="Richardson P."/>
        </authorList>
    </citation>
    <scope>NUCLEOTIDE SEQUENCE [LARGE SCALE GENOMIC DNA]</scope>
    <source>
        <strain>Pd 1222</strain>
    </source>
</reference>
<comment type="similarity">
    <text evidence="2">Belongs to the CbbQ/NirQ/NorQ/GpvN family.</text>
</comment>
<proteinExistence type="inferred from homology"/>
<accession>Q51664</accession>
<accession>A1B4X5</accession>
<feature type="chain" id="PRO_0000219571" description="Protein NorQ">
    <location>
        <begin position="1"/>
        <end position="270"/>
    </location>
</feature>
<feature type="binding site" evidence="1">
    <location>
        <begin position="42"/>
        <end position="49"/>
    </location>
    <ligand>
        <name>ATP</name>
        <dbReference type="ChEBI" id="CHEBI:30616"/>
    </ligand>
</feature>
<feature type="binding site" evidence="1">
    <location>
        <begin position="102"/>
        <end position="109"/>
    </location>
    <ligand>
        <name>ATP</name>
        <dbReference type="ChEBI" id="CHEBI:30616"/>
    </ligand>
</feature>
<feature type="sequence conflict" description="In Ref. 1; AAA68972." evidence="2" ref="1">
    <original>FYLPQ</original>
    <variation>LLPAA</variation>
    <location>
        <begin position="17"/>
        <end position="21"/>
    </location>
</feature>
<protein>
    <recommendedName>
        <fullName>Protein NorQ</fullName>
    </recommendedName>
</protein>
<dbReference type="EMBL" id="U28078">
    <property type="protein sequence ID" value="AAA68972.1"/>
    <property type="molecule type" value="Genomic_DNA"/>
</dbReference>
<dbReference type="EMBL" id="CP000489">
    <property type="protein sequence ID" value="ABL70569.1"/>
    <property type="molecule type" value="Genomic_DNA"/>
</dbReference>
<dbReference type="RefSeq" id="WP_011748762.1">
    <property type="nucleotide sequence ID" value="NC_008686.1"/>
</dbReference>
<dbReference type="SMR" id="Q51664"/>
<dbReference type="STRING" id="318586.Pden_2482"/>
<dbReference type="TCDB" id="3.D.4.10.1">
    <property type="family name" value="the proton-translocating cytochrome oxidase (cox) superfamily"/>
</dbReference>
<dbReference type="EnsemblBacteria" id="ABL70569">
    <property type="protein sequence ID" value="ABL70569"/>
    <property type="gene ID" value="Pden_2482"/>
</dbReference>
<dbReference type="GeneID" id="93450875"/>
<dbReference type="KEGG" id="pde:Pden_2482"/>
<dbReference type="eggNOG" id="COG0714">
    <property type="taxonomic scope" value="Bacteria"/>
</dbReference>
<dbReference type="HOGENOM" id="CLU_067562_0_0_5"/>
<dbReference type="OrthoDB" id="9808317at2"/>
<dbReference type="Proteomes" id="UP000000361">
    <property type="component" value="Chromosome 1"/>
</dbReference>
<dbReference type="GO" id="GO:0005524">
    <property type="term" value="F:ATP binding"/>
    <property type="evidence" value="ECO:0007669"/>
    <property type="project" value="UniProtKB-KW"/>
</dbReference>
<dbReference type="GO" id="GO:0016887">
    <property type="term" value="F:ATP hydrolysis activity"/>
    <property type="evidence" value="ECO:0007669"/>
    <property type="project" value="InterPro"/>
</dbReference>
<dbReference type="FunFam" id="3.40.50.300:FF:001731">
    <property type="entry name" value="Nitric oxide reductase NorQ protein"/>
    <property type="match status" value="1"/>
</dbReference>
<dbReference type="Gene3D" id="3.40.50.300">
    <property type="entry name" value="P-loop containing nucleotide triphosphate hydrolases"/>
    <property type="match status" value="1"/>
</dbReference>
<dbReference type="InterPro" id="IPR011704">
    <property type="entry name" value="ATPase_dyneun-rel_AAA"/>
</dbReference>
<dbReference type="InterPro" id="IPR050764">
    <property type="entry name" value="CbbQ/NirQ/NorQ/GpvN"/>
</dbReference>
<dbReference type="InterPro" id="IPR013615">
    <property type="entry name" value="CbbQ_C"/>
</dbReference>
<dbReference type="InterPro" id="IPR027417">
    <property type="entry name" value="P-loop_NTPase"/>
</dbReference>
<dbReference type="PANTHER" id="PTHR42759:SF7">
    <property type="entry name" value="DENITRIFICATION REGULATORY PROTEIN NIRQ"/>
    <property type="match status" value="1"/>
</dbReference>
<dbReference type="PANTHER" id="PTHR42759">
    <property type="entry name" value="MOXR FAMILY PROTEIN"/>
    <property type="match status" value="1"/>
</dbReference>
<dbReference type="Pfam" id="PF07728">
    <property type="entry name" value="AAA_5"/>
    <property type="match status" value="1"/>
</dbReference>
<dbReference type="Pfam" id="PF08406">
    <property type="entry name" value="CbbQ_C"/>
    <property type="match status" value="1"/>
</dbReference>
<dbReference type="SUPFAM" id="SSF52540">
    <property type="entry name" value="P-loop containing nucleoside triphosphate hydrolases"/>
    <property type="match status" value="1"/>
</dbReference>